<sequence>MSKPIRVRYAPSPTGLLHIGNARTALFNYLYARRHGGTFIIRIEDTDRKRHVEDGERSQLENLKWLGMDWDESPETHENYRQSERLALYQQYIDQLLAEGKAYKSYVTEEELAAERERQEAAGETPRYINEFIGMSADEKAKYIAEREAAGIVPTVRLAVNESGIYKWTDMVKGDIEFEGGNIGGDWVIQKKDGYPTYNFAVVVDDHDMQISHVIRGDDHIANTPKQLMVYEALGWEAPEFGHMTLIINSETGKKLSKRDTNTLQFIEDYRKKGYMPEAVFNFIALLGWNPGGEEEIFSREQLIALFDENRLSKSPAAFDQKKMDWMSNEYLKHADFETVYALCKPFLEEAGRLTEKAEKLVELYKPQLKSADEIIPLTDLFFSDFPELTEAEKEVMAGETVSTVLQAFKAKLEAMSDEDFKPENIFPQIKAVQKETGIKGKNLFMPIRIAVSGEMHGPELPNTIYLLGRDKSIEHIKNML</sequence>
<protein>
    <recommendedName>
        <fullName evidence="1">Glutamate--tRNA ligase</fullName>
        <ecNumber evidence="1">6.1.1.17</ecNumber>
    </recommendedName>
    <alternativeName>
        <fullName evidence="1">Glutamyl-tRNA synthetase</fullName>
        <shortName evidence="1">GluRS</shortName>
    </alternativeName>
</protein>
<evidence type="ECO:0000255" key="1">
    <source>
        <dbReference type="HAMAP-Rule" id="MF_00022"/>
    </source>
</evidence>
<organism>
    <name type="scientific">Streptococcus pyogenes serotype M18 (strain MGAS8232)</name>
    <dbReference type="NCBI Taxonomy" id="186103"/>
    <lineage>
        <taxon>Bacteria</taxon>
        <taxon>Bacillati</taxon>
        <taxon>Bacillota</taxon>
        <taxon>Bacilli</taxon>
        <taxon>Lactobacillales</taxon>
        <taxon>Streptococcaceae</taxon>
        <taxon>Streptococcus</taxon>
    </lineage>
</organism>
<comment type="function">
    <text evidence="1">Catalyzes the attachment of glutamate to tRNA(Glu) in a two-step reaction: glutamate is first activated by ATP to form Glu-AMP and then transferred to the acceptor end of tRNA(Glu).</text>
</comment>
<comment type="catalytic activity">
    <reaction evidence="1">
        <text>tRNA(Glu) + L-glutamate + ATP = L-glutamyl-tRNA(Glu) + AMP + diphosphate</text>
        <dbReference type="Rhea" id="RHEA:23540"/>
        <dbReference type="Rhea" id="RHEA-COMP:9663"/>
        <dbReference type="Rhea" id="RHEA-COMP:9680"/>
        <dbReference type="ChEBI" id="CHEBI:29985"/>
        <dbReference type="ChEBI" id="CHEBI:30616"/>
        <dbReference type="ChEBI" id="CHEBI:33019"/>
        <dbReference type="ChEBI" id="CHEBI:78442"/>
        <dbReference type="ChEBI" id="CHEBI:78520"/>
        <dbReference type="ChEBI" id="CHEBI:456215"/>
        <dbReference type="EC" id="6.1.1.17"/>
    </reaction>
</comment>
<comment type="subunit">
    <text evidence="1">Monomer.</text>
</comment>
<comment type="subcellular location">
    <subcellularLocation>
        <location evidence="1">Cytoplasm</location>
    </subcellularLocation>
</comment>
<comment type="similarity">
    <text evidence="1">Belongs to the class-I aminoacyl-tRNA synthetase family. Glutamate--tRNA ligase type 1 subfamily.</text>
</comment>
<proteinExistence type="inferred from homology"/>
<reference key="1">
    <citation type="journal article" date="2002" name="Proc. Natl. Acad. Sci. U.S.A.">
        <title>Genome sequence and comparative microarray analysis of serotype M18 group A Streptococcus strains associated with acute rheumatic fever outbreaks.</title>
        <authorList>
            <person name="Smoot J.C."/>
            <person name="Barbian K.D."/>
            <person name="Van Gompel J.J."/>
            <person name="Smoot L.M."/>
            <person name="Chaussee M.S."/>
            <person name="Sylva G.L."/>
            <person name="Sturdevant D.E."/>
            <person name="Ricklefs S.M."/>
            <person name="Porcella S.F."/>
            <person name="Parkins L.D."/>
            <person name="Beres S.B."/>
            <person name="Campbell D.S."/>
            <person name="Smith T.M."/>
            <person name="Zhang Q."/>
            <person name="Kapur V."/>
            <person name="Daly J.A."/>
            <person name="Veasy L.G."/>
            <person name="Musser J.M."/>
        </authorList>
    </citation>
    <scope>NUCLEOTIDE SEQUENCE [LARGE SCALE GENOMIC DNA]</scope>
    <source>
        <strain>MGAS8232</strain>
    </source>
</reference>
<feature type="chain" id="PRO_0000119670" description="Glutamate--tRNA ligase">
    <location>
        <begin position="1"/>
        <end position="481"/>
    </location>
</feature>
<feature type="short sequence motif" description="'HIGH' region" evidence="1">
    <location>
        <begin position="11"/>
        <end position="21"/>
    </location>
</feature>
<feature type="short sequence motif" description="'KMSKS' region" evidence="1">
    <location>
        <begin position="255"/>
        <end position="259"/>
    </location>
</feature>
<feature type="binding site" evidence="1">
    <location>
        <position position="258"/>
    </location>
    <ligand>
        <name>ATP</name>
        <dbReference type="ChEBI" id="CHEBI:30616"/>
    </ligand>
</feature>
<dbReference type="EC" id="6.1.1.17" evidence="1"/>
<dbReference type="EMBL" id="AE009949">
    <property type="protein sequence ID" value="AAL97010.1"/>
    <property type="molecule type" value="Genomic_DNA"/>
</dbReference>
<dbReference type="RefSeq" id="WP_002986105.1">
    <property type="nucleotide sequence ID" value="NC_003485.1"/>
</dbReference>
<dbReference type="SMR" id="P67024"/>
<dbReference type="KEGG" id="spm:spyM18_0223"/>
<dbReference type="HOGENOM" id="CLU_015768_6_1_9"/>
<dbReference type="GO" id="GO:0005829">
    <property type="term" value="C:cytosol"/>
    <property type="evidence" value="ECO:0007669"/>
    <property type="project" value="TreeGrafter"/>
</dbReference>
<dbReference type="GO" id="GO:0005524">
    <property type="term" value="F:ATP binding"/>
    <property type="evidence" value="ECO:0007669"/>
    <property type="project" value="UniProtKB-UniRule"/>
</dbReference>
<dbReference type="GO" id="GO:0004818">
    <property type="term" value="F:glutamate-tRNA ligase activity"/>
    <property type="evidence" value="ECO:0007669"/>
    <property type="project" value="UniProtKB-UniRule"/>
</dbReference>
<dbReference type="GO" id="GO:0000049">
    <property type="term" value="F:tRNA binding"/>
    <property type="evidence" value="ECO:0007669"/>
    <property type="project" value="InterPro"/>
</dbReference>
<dbReference type="GO" id="GO:0008270">
    <property type="term" value="F:zinc ion binding"/>
    <property type="evidence" value="ECO:0007669"/>
    <property type="project" value="InterPro"/>
</dbReference>
<dbReference type="GO" id="GO:0006424">
    <property type="term" value="P:glutamyl-tRNA aminoacylation"/>
    <property type="evidence" value="ECO:0007669"/>
    <property type="project" value="UniProtKB-UniRule"/>
</dbReference>
<dbReference type="CDD" id="cd00808">
    <property type="entry name" value="GluRS_core"/>
    <property type="match status" value="1"/>
</dbReference>
<dbReference type="FunFam" id="1.10.10.350:FF:000002">
    <property type="entry name" value="Glutamate--tRNA ligase"/>
    <property type="match status" value="1"/>
</dbReference>
<dbReference type="FunFam" id="3.40.50.620:FF:000007">
    <property type="entry name" value="Glutamate--tRNA ligase"/>
    <property type="match status" value="1"/>
</dbReference>
<dbReference type="Gene3D" id="1.10.10.350">
    <property type="match status" value="1"/>
</dbReference>
<dbReference type="Gene3D" id="3.40.50.620">
    <property type="entry name" value="HUPs"/>
    <property type="match status" value="1"/>
</dbReference>
<dbReference type="HAMAP" id="MF_00022">
    <property type="entry name" value="Glu_tRNA_synth_type1"/>
    <property type="match status" value="1"/>
</dbReference>
<dbReference type="InterPro" id="IPR045462">
    <property type="entry name" value="aa-tRNA-synth_I_cd-bd"/>
</dbReference>
<dbReference type="InterPro" id="IPR020751">
    <property type="entry name" value="aa-tRNA-synth_I_codon-bd_sub2"/>
</dbReference>
<dbReference type="InterPro" id="IPR001412">
    <property type="entry name" value="aa-tRNA-synth_I_CS"/>
</dbReference>
<dbReference type="InterPro" id="IPR008925">
    <property type="entry name" value="aa_tRNA-synth_I_cd-bd_sf"/>
</dbReference>
<dbReference type="InterPro" id="IPR004527">
    <property type="entry name" value="Glu-tRNA-ligase_bac/mito"/>
</dbReference>
<dbReference type="InterPro" id="IPR000924">
    <property type="entry name" value="Glu/Gln-tRNA-synth"/>
</dbReference>
<dbReference type="InterPro" id="IPR020058">
    <property type="entry name" value="Glu/Gln-tRNA-synth_Ib_cat-dom"/>
</dbReference>
<dbReference type="InterPro" id="IPR049940">
    <property type="entry name" value="GluQ/Sye"/>
</dbReference>
<dbReference type="InterPro" id="IPR033910">
    <property type="entry name" value="GluRS_core"/>
</dbReference>
<dbReference type="InterPro" id="IPR014729">
    <property type="entry name" value="Rossmann-like_a/b/a_fold"/>
</dbReference>
<dbReference type="NCBIfam" id="TIGR00464">
    <property type="entry name" value="gltX_bact"/>
    <property type="match status" value="1"/>
</dbReference>
<dbReference type="PANTHER" id="PTHR43311">
    <property type="entry name" value="GLUTAMATE--TRNA LIGASE"/>
    <property type="match status" value="1"/>
</dbReference>
<dbReference type="PANTHER" id="PTHR43311:SF2">
    <property type="entry name" value="GLUTAMATE--TRNA LIGASE, MITOCHONDRIAL-RELATED"/>
    <property type="match status" value="1"/>
</dbReference>
<dbReference type="Pfam" id="PF19269">
    <property type="entry name" value="Anticodon_2"/>
    <property type="match status" value="1"/>
</dbReference>
<dbReference type="Pfam" id="PF00749">
    <property type="entry name" value="tRNA-synt_1c"/>
    <property type="match status" value="1"/>
</dbReference>
<dbReference type="PRINTS" id="PR00987">
    <property type="entry name" value="TRNASYNTHGLU"/>
</dbReference>
<dbReference type="SUPFAM" id="SSF48163">
    <property type="entry name" value="An anticodon-binding domain of class I aminoacyl-tRNA synthetases"/>
    <property type="match status" value="1"/>
</dbReference>
<dbReference type="SUPFAM" id="SSF52374">
    <property type="entry name" value="Nucleotidylyl transferase"/>
    <property type="match status" value="1"/>
</dbReference>
<dbReference type="PROSITE" id="PS00178">
    <property type="entry name" value="AA_TRNA_LIGASE_I"/>
    <property type="match status" value="1"/>
</dbReference>
<accession>P67024</accession>
<accession>Q9A1J8</accession>
<keyword id="KW-0030">Aminoacyl-tRNA synthetase</keyword>
<keyword id="KW-0067">ATP-binding</keyword>
<keyword id="KW-0963">Cytoplasm</keyword>
<keyword id="KW-0436">Ligase</keyword>
<keyword id="KW-0547">Nucleotide-binding</keyword>
<keyword id="KW-0648">Protein biosynthesis</keyword>
<gene>
    <name evidence="1" type="primary">gltX</name>
    <name type="synonym">gluS</name>
    <name type="ordered locus">spyM18_0223</name>
</gene>
<name>SYE_STRP8</name>